<sequence>MRTSVLRQAGLCRAALAARHLQISSKPSAALLSQVTRAIAVQSLPSASLPRFYSAEATAQSNTAASNGLVTRFADLAALGVHENVVRAITHGMGYENMTEVQSMTISPALKGKDIVAQAKTGTGKTLGFLVPVIQKIITQDPDLAHRFGGKRARSDDIRAIIISPTRELAEQIGEEARKLVKGTGIIVQTAVGGTQKNAMLYKTRQQGCHILVGTPGRLNDLLSDSHSGIDAPRLSTLVLDEADRMLEVGFNEELRQIINYLPDRKVLPRQTLLYSATIPKDVVGLARSYIDKNNFEFVQTVKADEVLTHDRIPQYIVPCKGFENIYPAMLELIEKALNESRTNPEALPFKAIVFLPTTAEVIMANAIFKRLQWKFKHIPKTWDIHSKLTQNARTRAADEFKNARTGILFSSDVTARGMDFPNVSHVIQTHIPPNREQYIHRLGRTGRANKPGQGWLIVPDIELHAARSRLPGLPIKRNDELECASVNAADSGADKHANFQHILDAASRLPEDLFKDCYSSYLGGALQGIDRQALVYALNDLAKFGWGLEEPPAVRQSIMKHMGRVQGLRVETREHSMRPMGSGPGHRRDFNSRGPRRQSDDPFENALHRAQDLDRRPTRRQQASF</sequence>
<keyword id="KW-0067">ATP-binding</keyword>
<keyword id="KW-0143">Chaperone</keyword>
<keyword id="KW-0347">Helicase</keyword>
<keyword id="KW-0378">Hydrolase</keyword>
<keyword id="KW-0496">Mitochondrion</keyword>
<keyword id="KW-0507">mRNA processing</keyword>
<keyword id="KW-0508">mRNA splicing</keyword>
<keyword id="KW-0547">Nucleotide-binding</keyword>
<keyword id="KW-1185">Reference proteome</keyword>
<keyword id="KW-0694">RNA-binding</keyword>
<evidence type="ECO:0000250" key="1">
    <source>
        <dbReference type="UniProtKB" id="P15424"/>
    </source>
</evidence>
<evidence type="ECO:0000255" key="2">
    <source>
        <dbReference type="PROSITE-ProRule" id="PRU00541"/>
    </source>
</evidence>
<evidence type="ECO:0000255" key="3">
    <source>
        <dbReference type="PROSITE-ProRule" id="PRU00542"/>
    </source>
</evidence>
<evidence type="ECO:0000255" key="4">
    <source>
        <dbReference type="PROSITE-ProRule" id="PRU00552"/>
    </source>
</evidence>
<evidence type="ECO:0000255" key="5">
    <source>
        <dbReference type="RuleBase" id="RU000492"/>
    </source>
</evidence>
<evidence type="ECO:0000256" key="6">
    <source>
        <dbReference type="SAM" id="MobiDB-lite"/>
    </source>
</evidence>
<evidence type="ECO:0000269" key="7">
    <source>
    </source>
</evidence>
<evidence type="ECO:0000269" key="8">
    <source>
    </source>
</evidence>
<evidence type="ECO:0000269" key="9">
    <source>
    </source>
</evidence>
<evidence type="ECO:0000269" key="10">
    <source>
    </source>
</evidence>
<evidence type="ECO:0000269" key="11">
    <source>
    </source>
</evidence>
<evidence type="ECO:0000269" key="12">
    <source>
    </source>
</evidence>
<evidence type="ECO:0000269" key="13">
    <source>
    </source>
</evidence>
<evidence type="ECO:0000269" key="14">
    <source>
    </source>
</evidence>
<evidence type="ECO:0000269" key="15">
    <source>
    </source>
</evidence>
<evidence type="ECO:0000269" key="16">
    <source>
    </source>
</evidence>
<evidence type="ECO:0000269" key="17">
    <source>
    </source>
</evidence>
<evidence type="ECO:0000269" key="18">
    <source>
    </source>
</evidence>
<evidence type="ECO:0000303" key="19">
    <source>
    </source>
</evidence>
<evidence type="ECO:0000303" key="20">
    <source>
    </source>
</evidence>
<evidence type="ECO:0000305" key="21"/>
<comment type="function">
    <text evidence="7 8 9 10 11 12 13 14 15 16 17 18">Acts as an RNA chaperone to resolve non-native structures formed during RNA folding to promote mitochondrial group I, but also group II, intron splicing. Functions predominantly by disrupting accessible RNA secondary structure and depends on spontaneous openings in tightly packed RNAs to gain access to RNA helices.</text>
</comment>
<comment type="catalytic activity">
    <reaction evidence="17">
        <text>ATP + H2O = ADP + phosphate + H(+)</text>
        <dbReference type="Rhea" id="RHEA:13065"/>
        <dbReference type="ChEBI" id="CHEBI:15377"/>
        <dbReference type="ChEBI" id="CHEBI:15378"/>
        <dbReference type="ChEBI" id="CHEBI:30616"/>
        <dbReference type="ChEBI" id="CHEBI:43474"/>
        <dbReference type="ChEBI" id="CHEBI:456216"/>
        <dbReference type="EC" id="3.6.4.13"/>
    </reaction>
</comment>
<comment type="activity regulation">
    <text evidence="17">Activated by exposed helices in a group I intron RNA.</text>
</comment>
<comment type="subcellular location">
    <subcellularLocation>
        <location evidence="1">Mitochondrion matrix</location>
    </subcellularLocation>
</comment>
<comment type="domain">
    <text evidence="12">The C-ter region (residues 578-626) is not directly involved in DNA unwinding activity but functions by tethering cyt-19 to structured RNAs, so that it can efficiently disrupt exposed, non-native structural elements, allowing them to refold.</text>
</comment>
<comment type="domain">
    <text evidence="21">The Q motif is unique to and characteristic of the DEAD box family of RNA helicases and controls ATP binding and hydrolysis.</text>
</comment>
<comment type="similarity">
    <text evidence="5">Belongs to the DEAD box helicase family.</text>
</comment>
<name>CYT19_NEUCR</name>
<reference key="1">
    <citation type="journal article" date="2003" name="Nature">
        <title>The genome sequence of the filamentous fungus Neurospora crassa.</title>
        <authorList>
            <person name="Galagan J.E."/>
            <person name="Calvo S.E."/>
            <person name="Borkovich K.A."/>
            <person name="Selker E.U."/>
            <person name="Read N.D."/>
            <person name="Jaffe D.B."/>
            <person name="FitzHugh W."/>
            <person name="Ma L.-J."/>
            <person name="Smirnov S."/>
            <person name="Purcell S."/>
            <person name="Rehman B."/>
            <person name="Elkins T."/>
            <person name="Engels R."/>
            <person name="Wang S."/>
            <person name="Nielsen C.B."/>
            <person name="Butler J."/>
            <person name="Endrizzi M."/>
            <person name="Qui D."/>
            <person name="Ianakiev P."/>
            <person name="Bell-Pedersen D."/>
            <person name="Nelson M.A."/>
            <person name="Werner-Washburne M."/>
            <person name="Selitrennikoff C.P."/>
            <person name="Kinsey J.A."/>
            <person name="Braun E.L."/>
            <person name="Zelter A."/>
            <person name="Schulte U."/>
            <person name="Kothe G.O."/>
            <person name="Jedd G."/>
            <person name="Mewes H.-W."/>
            <person name="Staben C."/>
            <person name="Marcotte E."/>
            <person name="Greenberg D."/>
            <person name="Roy A."/>
            <person name="Foley K."/>
            <person name="Naylor J."/>
            <person name="Stange-Thomann N."/>
            <person name="Barrett R."/>
            <person name="Gnerre S."/>
            <person name="Kamal M."/>
            <person name="Kamvysselis M."/>
            <person name="Mauceli E.W."/>
            <person name="Bielke C."/>
            <person name="Rudd S."/>
            <person name="Frishman D."/>
            <person name="Krystofova S."/>
            <person name="Rasmussen C."/>
            <person name="Metzenberg R.L."/>
            <person name="Perkins D.D."/>
            <person name="Kroken S."/>
            <person name="Cogoni C."/>
            <person name="Macino G."/>
            <person name="Catcheside D.E.A."/>
            <person name="Li W."/>
            <person name="Pratt R.J."/>
            <person name="Osmani S.A."/>
            <person name="DeSouza C.P.C."/>
            <person name="Glass N.L."/>
            <person name="Orbach M.J."/>
            <person name="Berglund J.A."/>
            <person name="Voelker R."/>
            <person name="Yarden O."/>
            <person name="Plamann M."/>
            <person name="Seiler S."/>
            <person name="Dunlap J.C."/>
            <person name="Radford A."/>
            <person name="Aramayo R."/>
            <person name="Natvig D.O."/>
            <person name="Alex L.A."/>
            <person name="Mannhaupt G."/>
            <person name="Ebbole D.J."/>
            <person name="Freitag M."/>
            <person name="Paulsen I."/>
            <person name="Sachs M.S."/>
            <person name="Lander E.S."/>
            <person name="Nusbaum C."/>
            <person name="Birren B.W."/>
        </authorList>
    </citation>
    <scope>NUCLEOTIDE SEQUENCE [LARGE SCALE GENOMIC DNA]</scope>
    <source>
        <strain>ATCC 24698 / 74-OR23-1A / CBS 708.71 / DSM 1257 / FGSC 987</strain>
    </source>
</reference>
<reference key="2">
    <citation type="journal article" date="2002" name="Cell">
        <title>A DEAD-box protein functions as an ATP-dependent RNA chaperone in group I intron splicing.</title>
        <authorList>
            <person name="Mohr S."/>
            <person name="Stryker J.M."/>
            <person name="Lambowitz A.M."/>
        </authorList>
    </citation>
    <scope>IDENTIFICATION</scope>
    <scope>FUNCTION</scope>
</reference>
<reference key="3">
    <citation type="journal article" date="2005" name="Proc. Natl. Acad. Sci. U.S.A.">
        <title>The splicing of yeast mitochondrial group I and group II introns requires a DEAD-box protein with RNA chaperone function.</title>
        <authorList>
            <person name="Huang H.-R."/>
            <person name="Rowe C.E."/>
            <person name="Mohr S."/>
            <person name="Jiang Y."/>
            <person name="Lambowitz A.M."/>
            <person name="Perlman P.S."/>
        </authorList>
    </citation>
    <scope>FUNCTION</scope>
</reference>
<reference key="4">
    <citation type="journal article" date="2006" name="Proc. Natl. Acad. Sci. U.S.A.">
        <title>A DEAD-box protein alone promotes group II intron splicing and reverse splicing by acting as an RNA chaperone.</title>
        <authorList>
            <person name="Mohr S."/>
            <person name="Matsuura M."/>
            <person name="Perlman P.S."/>
            <person name="Lambowitz A.M."/>
        </authorList>
    </citation>
    <scope>FUNCTION</scope>
    <scope>RNA-BINDING</scope>
</reference>
<reference key="5">
    <citation type="journal article" date="2006" name="Proc. Natl. Acad. Sci. U.S.A.">
        <title>Nonspecific binding to structured RNA and preferential unwinding of an exposed helix by the CYT-19 protein, a DEAD-box RNA chaperone.</title>
        <authorList>
            <person name="Tijerina P."/>
            <person name="Bhaskaran H."/>
            <person name="Russell R."/>
        </authorList>
    </citation>
    <scope>FUNCTION</scope>
    <scope>RNA-BINDING</scope>
</reference>
<reference key="6">
    <citation type="journal article" date="2007" name="Biochemistry">
        <title>Probing the mechanisms of DEAD-box proteins as general RNA chaperones: the C-terminal domain of CYT-19 mediates general recognition of RNA.</title>
        <authorList>
            <person name="Grohman J.K."/>
            <person name="Del Campo M."/>
            <person name="Bhaskaran H."/>
            <person name="Tijerina P."/>
            <person name="Lambowitz A.M."/>
            <person name="Russell R."/>
        </authorList>
    </citation>
    <scope>FUNCTION</scope>
    <scope>RNA-BINDING</scope>
    <scope>DOMAIN</scope>
</reference>
<reference key="7">
    <citation type="journal article" date="2007" name="J. Mol. Biol.">
        <title>Involvement of DEAD-box proteins in group I and group II intron splicing. Biochemical characterization of Mss116p, ATP hydrolysis-dependent and -independent mechanisms, and general RNA chaperone activity.</title>
        <authorList>
            <person name="Halls C."/>
            <person name="Mohr S."/>
            <person name="Del Campo M."/>
            <person name="Yang Q."/>
            <person name="Jankowsky E."/>
            <person name="Lambowitz A.M."/>
        </authorList>
    </citation>
    <scope>FUNCTION</scope>
</reference>
<reference key="8">
    <citation type="journal article" date="2007" name="Nature">
        <title>Kinetic redistribution of native and misfolded RNAs by a DEAD-box chaperone.</title>
        <authorList>
            <person name="Bhaskaran H."/>
            <person name="Russell R."/>
        </authorList>
    </citation>
    <scope>FUNCTION</scope>
</reference>
<reference key="9">
    <citation type="journal article" date="2008" name="Proc. Natl. Acad. Sci. U.S.A.">
        <title>DEAD-box proteins can completely separate an RNA duplex using a single ATP.</title>
        <authorList>
            <person name="Chen Y."/>
            <person name="Potratz J.P."/>
            <person name="Tijerina P."/>
            <person name="Del Campo M."/>
            <person name="Lambowitz A.M."/>
            <person name="Russell R."/>
        </authorList>
    </citation>
    <scope>FUNCTION</scope>
</reference>
<reference key="10">
    <citation type="journal article" date="2009" name="J. Mol. Biol.">
        <title>Unwinding by local strand separation is critical for the function of DEAD-box proteins as RNA chaperones.</title>
        <authorList>
            <person name="Del Campo M."/>
            <person name="Mohr S."/>
            <person name="Jiang Y."/>
            <person name="Jia H."/>
            <person name="Jankowsky E."/>
            <person name="Lambowitz A.M."/>
        </authorList>
    </citation>
    <scope>FUNCTION</scope>
</reference>
<reference key="11">
    <citation type="journal article" date="2011" name="J. Biol. Chem.">
        <title>The Azoarcus group I intron ribozyme misfolds and is accelerated for refolding by ATP-dependent RNA chaperone proteins.</title>
        <authorList>
            <person name="Sinan S."/>
            <person name="Yuan X."/>
            <person name="Russell R."/>
        </authorList>
    </citation>
    <scope>FUNCTION</scope>
</reference>
<reference key="12">
    <citation type="journal article" date="2014" name="Proc. Natl. Acad. Sci. U.S.A.">
        <title>DEAD-box protein CYT-19 is activated by exposed helices in a group I intron RNA.</title>
        <authorList>
            <person name="Jarmoskaite I."/>
            <person name="Bhaskaran H."/>
            <person name="Seifert S."/>
            <person name="Russell R."/>
        </authorList>
    </citation>
    <scope>FUNCTION</scope>
    <scope>RNA-BINDING</scope>
    <scope>CATALYTIC ACTIVITY</scope>
    <scope>ACTIVITY REGULATION</scope>
</reference>
<reference key="13">
    <citation type="journal article" date="2014" name="PLoS Biol.">
        <title>DEAD-box helicase proteins disrupt RNA tertiary structure through helix capture.</title>
        <authorList>
            <person name="Pan C."/>
            <person name="Potratz J.P."/>
            <person name="Cannon B."/>
            <person name="Simpson Z.B."/>
            <person name="Ziehr J.L."/>
            <person name="Tijerina P."/>
            <person name="Russell R."/>
        </authorList>
    </citation>
    <scope>FUNCTION</scope>
    <scope>RNA-BINDING</scope>
</reference>
<gene>
    <name evidence="19" type="primary">cyt-19</name>
    <name evidence="20" type="ORF">NCU07670</name>
</gene>
<proteinExistence type="evidence at protein level"/>
<protein>
    <recommendedName>
        <fullName evidence="21">ATP-dependent RNA helicase cyt-19, mitochondrial</fullName>
        <ecNumber evidence="17">3.6.4.13</ecNumber>
    </recommendedName>
</protein>
<organism>
    <name type="scientific">Neurospora crassa (strain ATCC 24698 / 74-OR23-1A / CBS 708.71 / DSM 1257 / FGSC 987)</name>
    <dbReference type="NCBI Taxonomy" id="367110"/>
    <lineage>
        <taxon>Eukaryota</taxon>
        <taxon>Fungi</taxon>
        <taxon>Dikarya</taxon>
        <taxon>Ascomycota</taxon>
        <taxon>Pezizomycotina</taxon>
        <taxon>Sordariomycetes</taxon>
        <taxon>Sordariomycetidae</taxon>
        <taxon>Sordariales</taxon>
        <taxon>Sordariaceae</taxon>
        <taxon>Neurospora</taxon>
    </lineage>
</organism>
<feature type="chain" id="PRO_0000431670" description="ATP-dependent RNA helicase cyt-19, mitochondrial">
    <location>
        <begin position="1"/>
        <end position="626"/>
    </location>
</feature>
<feature type="domain" description="Helicase ATP-binding" evidence="2">
    <location>
        <begin position="106"/>
        <end position="297"/>
    </location>
</feature>
<feature type="domain" description="Helicase C-terminal" evidence="3">
    <location>
        <begin position="329"/>
        <end position="493"/>
    </location>
</feature>
<feature type="region of interest" description="Disordered" evidence="6">
    <location>
        <begin position="569"/>
        <end position="626"/>
    </location>
</feature>
<feature type="region of interest" description="RNA-binding" evidence="12">
    <location>
        <begin position="578"/>
        <end position="626"/>
    </location>
</feature>
<feature type="short sequence motif" description="Q motif" evidence="4">
    <location>
        <begin position="74"/>
        <end position="103"/>
    </location>
</feature>
<feature type="short sequence motif" description="DEAD box" evidence="2">
    <location>
        <begin position="241"/>
        <end position="244"/>
    </location>
</feature>
<feature type="compositionally biased region" description="Basic and acidic residues" evidence="6">
    <location>
        <begin position="607"/>
        <end position="617"/>
    </location>
</feature>
<feature type="binding site" evidence="2">
    <location>
        <begin position="119"/>
        <end position="126"/>
    </location>
    <ligand>
        <name>ATP</name>
        <dbReference type="ChEBI" id="CHEBI:30616"/>
    </ligand>
</feature>
<accession>Q1K8F7</accession>
<dbReference type="EC" id="3.6.4.13" evidence="17"/>
<dbReference type="EMBL" id="CM002239">
    <property type="protein sequence ID" value="EAA33076.1"/>
    <property type="molecule type" value="Genomic_DNA"/>
</dbReference>
<dbReference type="RefSeq" id="XP_962312.1">
    <property type="nucleotide sequence ID" value="XM_957219.2"/>
</dbReference>
<dbReference type="SMR" id="Q1K8F7"/>
<dbReference type="FunCoup" id="Q1K8F7">
    <property type="interactions" value="182"/>
</dbReference>
<dbReference type="STRING" id="367110.Q1K8F7"/>
<dbReference type="PaxDb" id="5141-EFNCRP00000008046"/>
<dbReference type="EnsemblFungi" id="EAA33076">
    <property type="protein sequence ID" value="EAA33076"/>
    <property type="gene ID" value="NCU07670"/>
</dbReference>
<dbReference type="GeneID" id="3878451"/>
<dbReference type="KEGG" id="ncr:NCU07670"/>
<dbReference type="VEuPathDB" id="FungiDB:NCU07670"/>
<dbReference type="HOGENOM" id="CLU_003041_26_6_1"/>
<dbReference type="InParanoid" id="Q1K8F7"/>
<dbReference type="OMA" id="TQREGCH"/>
<dbReference type="OrthoDB" id="193716at2759"/>
<dbReference type="Proteomes" id="UP000001805">
    <property type="component" value="Chromosome 4, Linkage Group IV"/>
</dbReference>
<dbReference type="GO" id="GO:0005759">
    <property type="term" value="C:mitochondrial matrix"/>
    <property type="evidence" value="ECO:0007669"/>
    <property type="project" value="UniProtKB-SubCell"/>
</dbReference>
<dbReference type="GO" id="GO:0005739">
    <property type="term" value="C:mitochondrion"/>
    <property type="evidence" value="ECO:0000318"/>
    <property type="project" value="GO_Central"/>
</dbReference>
<dbReference type="GO" id="GO:0005524">
    <property type="term" value="F:ATP binding"/>
    <property type="evidence" value="ECO:0007669"/>
    <property type="project" value="UniProtKB-KW"/>
</dbReference>
<dbReference type="GO" id="GO:0016887">
    <property type="term" value="F:ATP hydrolysis activity"/>
    <property type="evidence" value="ECO:0007669"/>
    <property type="project" value="RHEA"/>
</dbReference>
<dbReference type="GO" id="GO:0003723">
    <property type="term" value="F:RNA binding"/>
    <property type="evidence" value="ECO:0007669"/>
    <property type="project" value="UniProtKB-KW"/>
</dbReference>
<dbReference type="GO" id="GO:0003724">
    <property type="term" value="F:RNA helicase activity"/>
    <property type="evidence" value="ECO:0007669"/>
    <property type="project" value="UniProtKB-EC"/>
</dbReference>
<dbReference type="GO" id="GO:0006397">
    <property type="term" value="P:mRNA processing"/>
    <property type="evidence" value="ECO:0007669"/>
    <property type="project" value="UniProtKB-KW"/>
</dbReference>
<dbReference type="GO" id="GO:0008380">
    <property type="term" value="P:RNA splicing"/>
    <property type="evidence" value="ECO:0007669"/>
    <property type="project" value="UniProtKB-KW"/>
</dbReference>
<dbReference type="CDD" id="cd17964">
    <property type="entry name" value="DEADc_MSS116"/>
    <property type="match status" value="1"/>
</dbReference>
<dbReference type="CDD" id="cd18787">
    <property type="entry name" value="SF2_C_DEAD"/>
    <property type="match status" value="1"/>
</dbReference>
<dbReference type="Gene3D" id="3.40.50.300">
    <property type="entry name" value="P-loop containing nucleotide triphosphate hydrolases"/>
    <property type="match status" value="2"/>
</dbReference>
<dbReference type="InterPro" id="IPR011545">
    <property type="entry name" value="DEAD/DEAH_box_helicase_dom"/>
</dbReference>
<dbReference type="InterPro" id="IPR014001">
    <property type="entry name" value="Helicase_ATP-bd"/>
</dbReference>
<dbReference type="InterPro" id="IPR001650">
    <property type="entry name" value="Helicase_C-like"/>
</dbReference>
<dbReference type="InterPro" id="IPR027417">
    <property type="entry name" value="P-loop_NTPase"/>
</dbReference>
<dbReference type="InterPro" id="IPR000629">
    <property type="entry name" value="RNA-helicase_DEAD-box_CS"/>
</dbReference>
<dbReference type="PANTHER" id="PTHR24031">
    <property type="entry name" value="RNA HELICASE"/>
    <property type="match status" value="1"/>
</dbReference>
<dbReference type="Pfam" id="PF00270">
    <property type="entry name" value="DEAD"/>
    <property type="match status" value="1"/>
</dbReference>
<dbReference type="Pfam" id="PF00271">
    <property type="entry name" value="Helicase_C"/>
    <property type="match status" value="1"/>
</dbReference>
<dbReference type="SMART" id="SM00487">
    <property type="entry name" value="DEXDc"/>
    <property type="match status" value="1"/>
</dbReference>
<dbReference type="SMART" id="SM00490">
    <property type="entry name" value="HELICc"/>
    <property type="match status" value="1"/>
</dbReference>
<dbReference type="SUPFAM" id="SSF52540">
    <property type="entry name" value="P-loop containing nucleoside triphosphate hydrolases"/>
    <property type="match status" value="2"/>
</dbReference>
<dbReference type="PROSITE" id="PS00039">
    <property type="entry name" value="DEAD_ATP_HELICASE"/>
    <property type="match status" value="1"/>
</dbReference>
<dbReference type="PROSITE" id="PS51192">
    <property type="entry name" value="HELICASE_ATP_BIND_1"/>
    <property type="match status" value="1"/>
</dbReference>
<dbReference type="PROSITE" id="PS51194">
    <property type="entry name" value="HELICASE_CTER"/>
    <property type="match status" value="1"/>
</dbReference>
<dbReference type="PROSITE" id="PS51195">
    <property type="entry name" value="Q_MOTIF"/>
    <property type="match status" value="1"/>
</dbReference>